<keyword id="KW-0004">4Fe-4S</keyword>
<keyword id="KW-0963">Cytoplasm</keyword>
<keyword id="KW-0408">Iron</keyword>
<keyword id="KW-0411">Iron-sulfur</keyword>
<keyword id="KW-0479">Metal-binding</keyword>
<keyword id="KW-1185">Reference proteome</keyword>
<keyword id="KW-0949">S-adenosyl-L-methionine</keyword>
<keyword id="KW-0808">Transferase</keyword>
<organism>
    <name type="scientific">Jannaschia sp. (strain CCS1)</name>
    <dbReference type="NCBI Taxonomy" id="290400"/>
    <lineage>
        <taxon>Bacteria</taxon>
        <taxon>Pseudomonadati</taxon>
        <taxon>Pseudomonadota</taxon>
        <taxon>Alphaproteobacteria</taxon>
        <taxon>Rhodobacterales</taxon>
        <taxon>Roseobacteraceae</taxon>
        <taxon>Jannaschia</taxon>
    </lineage>
</organism>
<gene>
    <name evidence="1" type="primary">rimO</name>
    <name type="ordered locus">Jann_1015</name>
</gene>
<evidence type="ECO:0000255" key="1">
    <source>
        <dbReference type="HAMAP-Rule" id="MF_01865"/>
    </source>
</evidence>
<evidence type="ECO:0000255" key="2">
    <source>
        <dbReference type="PROSITE-ProRule" id="PRU01266"/>
    </source>
</evidence>
<name>RIMO_JANSC</name>
<feature type="chain" id="PRO_0000374867" description="Ribosomal protein uS12 methylthiotransferase RimO">
    <location>
        <begin position="1"/>
        <end position="458"/>
    </location>
</feature>
<feature type="domain" description="MTTase N-terminal" evidence="1">
    <location>
        <begin position="26"/>
        <end position="136"/>
    </location>
</feature>
<feature type="domain" description="Radical SAM core" evidence="2">
    <location>
        <begin position="153"/>
        <end position="389"/>
    </location>
</feature>
<feature type="domain" description="TRAM" evidence="1">
    <location>
        <begin position="392"/>
        <end position="458"/>
    </location>
</feature>
<feature type="binding site" evidence="1">
    <location>
        <position position="35"/>
    </location>
    <ligand>
        <name>[4Fe-4S] cluster</name>
        <dbReference type="ChEBI" id="CHEBI:49883"/>
        <label>1</label>
    </ligand>
</feature>
<feature type="binding site" evidence="1">
    <location>
        <position position="71"/>
    </location>
    <ligand>
        <name>[4Fe-4S] cluster</name>
        <dbReference type="ChEBI" id="CHEBI:49883"/>
        <label>1</label>
    </ligand>
</feature>
<feature type="binding site" evidence="1">
    <location>
        <position position="100"/>
    </location>
    <ligand>
        <name>[4Fe-4S] cluster</name>
        <dbReference type="ChEBI" id="CHEBI:49883"/>
        <label>1</label>
    </ligand>
</feature>
<feature type="binding site" evidence="1">
    <location>
        <position position="167"/>
    </location>
    <ligand>
        <name>[4Fe-4S] cluster</name>
        <dbReference type="ChEBI" id="CHEBI:49883"/>
        <label>2</label>
        <note>4Fe-4S-S-AdoMet</note>
    </ligand>
</feature>
<feature type="binding site" evidence="1">
    <location>
        <position position="171"/>
    </location>
    <ligand>
        <name>[4Fe-4S] cluster</name>
        <dbReference type="ChEBI" id="CHEBI:49883"/>
        <label>2</label>
        <note>4Fe-4S-S-AdoMet</note>
    </ligand>
</feature>
<feature type="binding site" evidence="1">
    <location>
        <position position="174"/>
    </location>
    <ligand>
        <name>[4Fe-4S] cluster</name>
        <dbReference type="ChEBI" id="CHEBI:49883"/>
        <label>2</label>
        <note>4Fe-4S-S-AdoMet</note>
    </ligand>
</feature>
<protein>
    <recommendedName>
        <fullName evidence="1">Ribosomal protein uS12 methylthiotransferase RimO</fullName>
        <shortName evidence="1">uS12 MTTase</shortName>
        <shortName evidence="1">uS12 methylthiotransferase</shortName>
        <ecNumber evidence="1">2.8.4.4</ecNumber>
    </recommendedName>
    <alternativeName>
        <fullName evidence="1">Ribosomal protein uS12 (aspartate-C(3))-methylthiotransferase</fullName>
    </alternativeName>
    <alternativeName>
        <fullName evidence="1">Ribosome maturation factor RimO</fullName>
    </alternativeName>
</protein>
<comment type="function">
    <text evidence="1">Catalyzes the methylthiolation of an aspartic acid residue of ribosomal protein uS12.</text>
</comment>
<comment type="catalytic activity">
    <reaction evidence="1">
        <text>L-aspartate(89)-[ribosomal protein uS12]-hydrogen + (sulfur carrier)-SH + AH2 + 2 S-adenosyl-L-methionine = 3-methylsulfanyl-L-aspartate(89)-[ribosomal protein uS12]-hydrogen + (sulfur carrier)-H + 5'-deoxyadenosine + L-methionine + A + S-adenosyl-L-homocysteine + 2 H(+)</text>
        <dbReference type="Rhea" id="RHEA:37087"/>
        <dbReference type="Rhea" id="RHEA-COMP:10460"/>
        <dbReference type="Rhea" id="RHEA-COMP:10461"/>
        <dbReference type="Rhea" id="RHEA-COMP:14737"/>
        <dbReference type="Rhea" id="RHEA-COMP:14739"/>
        <dbReference type="ChEBI" id="CHEBI:13193"/>
        <dbReference type="ChEBI" id="CHEBI:15378"/>
        <dbReference type="ChEBI" id="CHEBI:17319"/>
        <dbReference type="ChEBI" id="CHEBI:17499"/>
        <dbReference type="ChEBI" id="CHEBI:29917"/>
        <dbReference type="ChEBI" id="CHEBI:29961"/>
        <dbReference type="ChEBI" id="CHEBI:57844"/>
        <dbReference type="ChEBI" id="CHEBI:57856"/>
        <dbReference type="ChEBI" id="CHEBI:59789"/>
        <dbReference type="ChEBI" id="CHEBI:64428"/>
        <dbReference type="ChEBI" id="CHEBI:73599"/>
        <dbReference type="EC" id="2.8.4.4"/>
    </reaction>
</comment>
<comment type="cofactor">
    <cofactor evidence="1">
        <name>[4Fe-4S] cluster</name>
        <dbReference type="ChEBI" id="CHEBI:49883"/>
    </cofactor>
    <text evidence="1">Binds 2 [4Fe-4S] clusters. One cluster is coordinated with 3 cysteines and an exchangeable S-adenosyl-L-methionine.</text>
</comment>
<comment type="subcellular location">
    <subcellularLocation>
        <location evidence="1">Cytoplasm</location>
    </subcellularLocation>
</comment>
<comment type="similarity">
    <text evidence="1">Belongs to the methylthiotransferase family. RimO subfamily.</text>
</comment>
<proteinExistence type="inferred from homology"/>
<sequence length="458" mass="50347">MSQNPPLLRPDLARARVPDDARPGQPRIGMVSLGCPKALVDSERILTRLRAEGYAISPDYTGAEAVIVNTCGFLDSAKLESLEAIGEALEANGKVIVTGCLGAEPEYITGAHPTVLAVTGPQQYEQVLDAVHGAVPPAPDPFIDLLPPAGVKLTPRHYAYLKIAEGCDHKCKFCIIPDMRGKLVSRPQTAVMREAEKLVDSGVKELLIISQDTSAYGVDWKDRNKAGDEKFPILNLSRDLSTLGAWVRLHYVYPYPHVRELIPLMADPANGLLPYLDIPFQHAHPDVLKRMARPAAASRTLDEIAAWRRDCPNITLRSTFIVGYPGETEAEFQTLLDWLDEAQLDRIGCFQYENVDGARSNALPDHVAPEVKQDRWDRFMEKAQAISEAKLQAKVGRTMQVLVDSVDEEGATCRTVADAPEIDGNLFIDEGFDGLTPGDLVTVEVDEASEYDLWGKLT</sequence>
<accession>Q28TN0</accession>
<dbReference type="EC" id="2.8.4.4" evidence="1"/>
<dbReference type="EMBL" id="CP000264">
    <property type="protein sequence ID" value="ABD53932.1"/>
    <property type="molecule type" value="Genomic_DNA"/>
</dbReference>
<dbReference type="RefSeq" id="WP_011454139.1">
    <property type="nucleotide sequence ID" value="NC_007802.1"/>
</dbReference>
<dbReference type="SMR" id="Q28TN0"/>
<dbReference type="STRING" id="290400.Jann_1015"/>
<dbReference type="KEGG" id="jan:Jann_1015"/>
<dbReference type="eggNOG" id="COG0621">
    <property type="taxonomic scope" value="Bacteria"/>
</dbReference>
<dbReference type="HOGENOM" id="CLU_018697_0_0_5"/>
<dbReference type="OrthoDB" id="9805215at2"/>
<dbReference type="Proteomes" id="UP000008326">
    <property type="component" value="Chromosome"/>
</dbReference>
<dbReference type="GO" id="GO:0005829">
    <property type="term" value="C:cytosol"/>
    <property type="evidence" value="ECO:0007669"/>
    <property type="project" value="TreeGrafter"/>
</dbReference>
<dbReference type="GO" id="GO:0051539">
    <property type="term" value="F:4 iron, 4 sulfur cluster binding"/>
    <property type="evidence" value="ECO:0007669"/>
    <property type="project" value="UniProtKB-UniRule"/>
</dbReference>
<dbReference type="GO" id="GO:0035599">
    <property type="term" value="F:aspartic acid methylthiotransferase activity"/>
    <property type="evidence" value="ECO:0007669"/>
    <property type="project" value="TreeGrafter"/>
</dbReference>
<dbReference type="GO" id="GO:0046872">
    <property type="term" value="F:metal ion binding"/>
    <property type="evidence" value="ECO:0007669"/>
    <property type="project" value="UniProtKB-KW"/>
</dbReference>
<dbReference type="GO" id="GO:0103039">
    <property type="term" value="F:protein methylthiotransferase activity"/>
    <property type="evidence" value="ECO:0007669"/>
    <property type="project" value="UniProtKB-EC"/>
</dbReference>
<dbReference type="GO" id="GO:0006400">
    <property type="term" value="P:tRNA modification"/>
    <property type="evidence" value="ECO:0007669"/>
    <property type="project" value="InterPro"/>
</dbReference>
<dbReference type="CDD" id="cd01335">
    <property type="entry name" value="Radical_SAM"/>
    <property type="match status" value="1"/>
</dbReference>
<dbReference type="FunFam" id="3.40.50.12160:FF:000002">
    <property type="entry name" value="Ribosomal protein S12 methylthiotransferase RimO"/>
    <property type="match status" value="1"/>
</dbReference>
<dbReference type="FunFam" id="3.80.30.20:FF:000001">
    <property type="entry name" value="tRNA-2-methylthio-N(6)-dimethylallyladenosine synthase 2"/>
    <property type="match status" value="1"/>
</dbReference>
<dbReference type="Gene3D" id="3.40.50.12160">
    <property type="entry name" value="Methylthiotransferase, N-terminal domain"/>
    <property type="match status" value="1"/>
</dbReference>
<dbReference type="Gene3D" id="2.40.50.140">
    <property type="entry name" value="Nucleic acid-binding proteins"/>
    <property type="match status" value="1"/>
</dbReference>
<dbReference type="Gene3D" id="3.80.30.20">
    <property type="entry name" value="tm_1862 like domain"/>
    <property type="match status" value="1"/>
</dbReference>
<dbReference type="HAMAP" id="MF_01865">
    <property type="entry name" value="MTTase_RimO"/>
    <property type="match status" value="1"/>
</dbReference>
<dbReference type="InterPro" id="IPR006638">
    <property type="entry name" value="Elp3/MiaA/NifB-like_rSAM"/>
</dbReference>
<dbReference type="InterPro" id="IPR005839">
    <property type="entry name" value="Methylthiotransferase"/>
</dbReference>
<dbReference type="InterPro" id="IPR013848">
    <property type="entry name" value="Methylthiotransferase_N"/>
</dbReference>
<dbReference type="InterPro" id="IPR038135">
    <property type="entry name" value="Methylthiotransferase_N_sf"/>
</dbReference>
<dbReference type="InterPro" id="IPR012340">
    <property type="entry name" value="NA-bd_OB-fold"/>
</dbReference>
<dbReference type="InterPro" id="IPR005840">
    <property type="entry name" value="Ribosomal_uS12_MeSTrfase_RimO"/>
</dbReference>
<dbReference type="InterPro" id="IPR007197">
    <property type="entry name" value="rSAM"/>
</dbReference>
<dbReference type="InterPro" id="IPR023404">
    <property type="entry name" value="rSAM_horseshoe"/>
</dbReference>
<dbReference type="InterPro" id="IPR002792">
    <property type="entry name" value="TRAM_dom"/>
</dbReference>
<dbReference type="NCBIfam" id="TIGR01125">
    <property type="entry name" value="30S ribosomal protein S12 methylthiotransferase RimO"/>
    <property type="match status" value="1"/>
</dbReference>
<dbReference type="NCBIfam" id="TIGR00089">
    <property type="entry name" value="MiaB/RimO family radical SAM methylthiotransferase"/>
    <property type="match status" value="1"/>
</dbReference>
<dbReference type="PANTHER" id="PTHR43837">
    <property type="entry name" value="RIBOSOMAL PROTEIN S12 METHYLTHIOTRANSFERASE RIMO"/>
    <property type="match status" value="1"/>
</dbReference>
<dbReference type="PANTHER" id="PTHR43837:SF1">
    <property type="entry name" value="RIBOSOMAL PROTEIN US12 METHYLTHIOTRANSFERASE RIMO"/>
    <property type="match status" value="1"/>
</dbReference>
<dbReference type="Pfam" id="PF04055">
    <property type="entry name" value="Radical_SAM"/>
    <property type="match status" value="1"/>
</dbReference>
<dbReference type="Pfam" id="PF18693">
    <property type="entry name" value="TRAM_2"/>
    <property type="match status" value="1"/>
</dbReference>
<dbReference type="Pfam" id="PF00919">
    <property type="entry name" value="UPF0004"/>
    <property type="match status" value="1"/>
</dbReference>
<dbReference type="SFLD" id="SFLDG01082">
    <property type="entry name" value="B12-binding_domain_containing"/>
    <property type="match status" value="1"/>
</dbReference>
<dbReference type="SFLD" id="SFLDG01061">
    <property type="entry name" value="methylthiotransferase"/>
    <property type="match status" value="1"/>
</dbReference>
<dbReference type="SFLD" id="SFLDF00274">
    <property type="entry name" value="ribosomal_protein_S12_methylth"/>
    <property type="match status" value="1"/>
</dbReference>
<dbReference type="SMART" id="SM00729">
    <property type="entry name" value="Elp3"/>
    <property type="match status" value="1"/>
</dbReference>
<dbReference type="SUPFAM" id="SSF102114">
    <property type="entry name" value="Radical SAM enzymes"/>
    <property type="match status" value="1"/>
</dbReference>
<dbReference type="PROSITE" id="PS51449">
    <property type="entry name" value="MTTASE_N"/>
    <property type="match status" value="1"/>
</dbReference>
<dbReference type="PROSITE" id="PS51918">
    <property type="entry name" value="RADICAL_SAM"/>
    <property type="match status" value="1"/>
</dbReference>
<dbReference type="PROSITE" id="PS50926">
    <property type="entry name" value="TRAM"/>
    <property type="match status" value="1"/>
</dbReference>
<reference key="1">
    <citation type="submission" date="2006-02" db="EMBL/GenBank/DDBJ databases">
        <title>Complete sequence of chromosome of Jannaschia sp. CCS1.</title>
        <authorList>
            <consortium name="US DOE Joint Genome Institute"/>
            <person name="Copeland A."/>
            <person name="Lucas S."/>
            <person name="Lapidus A."/>
            <person name="Barry K."/>
            <person name="Detter J.C."/>
            <person name="Glavina del Rio T."/>
            <person name="Hammon N."/>
            <person name="Israni S."/>
            <person name="Pitluck S."/>
            <person name="Brettin T."/>
            <person name="Bruce D."/>
            <person name="Han C."/>
            <person name="Tapia R."/>
            <person name="Gilna P."/>
            <person name="Chertkov O."/>
            <person name="Saunders E."/>
            <person name="Schmutz J."/>
            <person name="Larimer F."/>
            <person name="Land M."/>
            <person name="Kyrpides N."/>
            <person name="Lykidis A."/>
            <person name="Moran M.A."/>
            <person name="Belas R."/>
            <person name="Ye W."/>
            <person name="Buchan A."/>
            <person name="Gonzalez J.M."/>
            <person name="Schell M.A."/>
            <person name="Richardson P."/>
        </authorList>
    </citation>
    <scope>NUCLEOTIDE SEQUENCE [LARGE SCALE GENOMIC DNA]</scope>
    <source>
        <strain>CCS1</strain>
    </source>
</reference>